<name>GLPB_SHIB3</name>
<reference key="1">
    <citation type="submission" date="2008-05" db="EMBL/GenBank/DDBJ databases">
        <title>Complete sequence of Shigella boydii serotype 18 strain BS512.</title>
        <authorList>
            <person name="Rasko D.A."/>
            <person name="Rosovitz M."/>
            <person name="Maurelli A.T."/>
            <person name="Myers G."/>
            <person name="Seshadri R."/>
            <person name="Cer R."/>
            <person name="Jiang L."/>
            <person name="Ravel J."/>
            <person name="Sebastian Y."/>
        </authorList>
    </citation>
    <scope>NUCLEOTIDE SEQUENCE [LARGE SCALE GENOMIC DNA]</scope>
    <source>
        <strain>CDC 3083-94 / BS512</strain>
    </source>
</reference>
<comment type="function">
    <text evidence="1">Conversion of glycerol 3-phosphate to dihydroxyacetone. Uses fumarate or nitrate as electron acceptor.</text>
</comment>
<comment type="catalytic activity">
    <reaction evidence="1">
        <text>a quinone + sn-glycerol 3-phosphate = dihydroxyacetone phosphate + a quinol</text>
        <dbReference type="Rhea" id="RHEA:18977"/>
        <dbReference type="ChEBI" id="CHEBI:24646"/>
        <dbReference type="ChEBI" id="CHEBI:57597"/>
        <dbReference type="ChEBI" id="CHEBI:57642"/>
        <dbReference type="ChEBI" id="CHEBI:132124"/>
        <dbReference type="EC" id="1.1.5.3"/>
    </reaction>
</comment>
<comment type="cofactor">
    <cofactor evidence="1">
        <name>FMN</name>
        <dbReference type="ChEBI" id="CHEBI:58210"/>
    </cofactor>
</comment>
<comment type="pathway">
    <text evidence="1">Polyol metabolism; glycerol degradation via glycerol kinase pathway; glycerone phosphate from sn-glycerol 3-phosphate (anaerobic route): step 1/1.</text>
</comment>
<comment type="subunit">
    <text evidence="1">Composed of a catalytic GlpA/B dimer and of membrane bound GlpC.</text>
</comment>
<comment type="similarity">
    <text evidence="1">Belongs to the anaerobic G-3-P dehydrogenase subunit B family.</text>
</comment>
<evidence type="ECO:0000255" key="1">
    <source>
        <dbReference type="HAMAP-Rule" id="MF_00753"/>
    </source>
</evidence>
<proteinExistence type="inferred from homology"/>
<organism>
    <name type="scientific">Shigella boydii serotype 18 (strain CDC 3083-94 / BS512)</name>
    <dbReference type="NCBI Taxonomy" id="344609"/>
    <lineage>
        <taxon>Bacteria</taxon>
        <taxon>Pseudomonadati</taxon>
        <taxon>Pseudomonadota</taxon>
        <taxon>Gammaproteobacteria</taxon>
        <taxon>Enterobacterales</taxon>
        <taxon>Enterobacteriaceae</taxon>
        <taxon>Shigella</taxon>
    </lineage>
</organism>
<protein>
    <recommendedName>
        <fullName evidence="1">Anaerobic glycerol-3-phosphate dehydrogenase subunit B</fullName>
        <shortName evidence="1">Anaerobic G-3-P dehydrogenase subunit B</shortName>
        <shortName evidence="1">Anaerobic G3Pdhase B</shortName>
        <ecNumber evidence="1">1.1.5.3</ecNumber>
    </recommendedName>
</protein>
<gene>
    <name evidence="1" type="primary">glpB</name>
    <name type="ordered locus">SbBS512_E2624</name>
</gene>
<feature type="chain" id="PRO_1000133375" description="Anaerobic glycerol-3-phosphate dehydrogenase subunit B">
    <location>
        <begin position="1"/>
        <end position="419"/>
    </location>
</feature>
<keyword id="KW-0285">Flavoprotein</keyword>
<keyword id="KW-0288">FMN</keyword>
<keyword id="KW-0560">Oxidoreductase</keyword>
<keyword id="KW-1185">Reference proteome</keyword>
<sequence length="419" mass="45324">MRFDTVIMGGGLAGLLCGLQLQKHGLRCAIVTRGQSALHFSSGSLDLLSHLPDGQPVADIHSGLESLRQQAPAHPYSLLGPQRVLDLACQAQALIAESGAQLQGSVELAHQRITPLGTLRSTWLSSPEVPVWPLPAKKICVVGISGLMDFQAHLAAASLRELDLSVETAEIELPELDVLRNNATEFRAVNIARFLDNEENWPLLLDALIPVANTCEMILMPACFGLADDKLWRWLNEKLPCSLMLLPTLPPSVLGIRLQNQLQRQFVRQGGVWMPGDEVKKVTCKNGVVNEIWTRNHADIPLRPHFAVLASGSFFSGGLVAERNGIREPILGLDVLQTATRGEWYKGDFFAPQPWQQFGVTTDETLRPSQAGQTIENLFAIGSVLGGFDPIAQGCGGGVCAVSALHAAQQIAQRAGGQQ</sequence>
<dbReference type="EC" id="1.1.5.3" evidence="1"/>
<dbReference type="EMBL" id="CP001063">
    <property type="protein sequence ID" value="ACD08194.1"/>
    <property type="molecule type" value="Genomic_DNA"/>
</dbReference>
<dbReference type="RefSeq" id="WP_001209906.1">
    <property type="nucleotide sequence ID" value="NC_010658.1"/>
</dbReference>
<dbReference type="STRING" id="344609.SbBS512_E2624"/>
<dbReference type="KEGG" id="sbc:SbBS512_E2624"/>
<dbReference type="HOGENOM" id="CLU_047793_0_0_6"/>
<dbReference type="UniPathway" id="UPA00618">
    <property type="reaction ID" value="UER00673"/>
</dbReference>
<dbReference type="Proteomes" id="UP000001030">
    <property type="component" value="Chromosome"/>
</dbReference>
<dbReference type="GO" id="GO:0009331">
    <property type="term" value="C:glycerol-3-phosphate dehydrogenase (FAD) complex"/>
    <property type="evidence" value="ECO:0007669"/>
    <property type="project" value="InterPro"/>
</dbReference>
<dbReference type="GO" id="GO:0004368">
    <property type="term" value="F:glycerol-3-phosphate dehydrogenase (quinone) activity"/>
    <property type="evidence" value="ECO:0007669"/>
    <property type="project" value="UniProtKB-UniRule"/>
</dbReference>
<dbReference type="GO" id="GO:0009061">
    <property type="term" value="P:anaerobic respiration"/>
    <property type="evidence" value="ECO:0007669"/>
    <property type="project" value="TreeGrafter"/>
</dbReference>
<dbReference type="GO" id="GO:0019563">
    <property type="term" value="P:glycerol catabolic process"/>
    <property type="evidence" value="ECO:0007669"/>
    <property type="project" value="UniProtKB-UniRule"/>
</dbReference>
<dbReference type="GO" id="GO:0046168">
    <property type="term" value="P:glycerol-3-phosphate catabolic process"/>
    <property type="evidence" value="ECO:0007669"/>
    <property type="project" value="TreeGrafter"/>
</dbReference>
<dbReference type="Gene3D" id="3.50.50.60">
    <property type="entry name" value="FAD/NAD(P)-binding domain"/>
    <property type="match status" value="1"/>
</dbReference>
<dbReference type="HAMAP" id="MF_00753">
    <property type="entry name" value="Glycerol3P_GlpB"/>
    <property type="match status" value="1"/>
</dbReference>
<dbReference type="InterPro" id="IPR003953">
    <property type="entry name" value="FAD-dep_OxRdtase_2_FAD-bd"/>
</dbReference>
<dbReference type="InterPro" id="IPR050315">
    <property type="entry name" value="FAD-oxidoreductase_2"/>
</dbReference>
<dbReference type="InterPro" id="IPR036188">
    <property type="entry name" value="FAD/NAD-bd_sf"/>
</dbReference>
<dbReference type="InterPro" id="IPR009158">
    <property type="entry name" value="G3P_DH_GlpB_su"/>
</dbReference>
<dbReference type="NCBIfam" id="TIGR03378">
    <property type="entry name" value="glycerol3P_GlpB"/>
    <property type="match status" value="1"/>
</dbReference>
<dbReference type="NCBIfam" id="NF003718">
    <property type="entry name" value="PRK05329.1-1"/>
    <property type="match status" value="1"/>
</dbReference>
<dbReference type="NCBIfam" id="NF003719">
    <property type="entry name" value="PRK05329.1-2"/>
    <property type="match status" value="1"/>
</dbReference>
<dbReference type="NCBIfam" id="NF003720">
    <property type="entry name" value="PRK05329.1-3"/>
    <property type="match status" value="1"/>
</dbReference>
<dbReference type="NCBIfam" id="NF003721">
    <property type="entry name" value="PRK05329.1-4"/>
    <property type="match status" value="1"/>
</dbReference>
<dbReference type="PANTHER" id="PTHR43400:SF11">
    <property type="entry name" value="ANAEROBIC GLYCEROL-3-PHOSPHATE DEHYDROGENASE SUBUNIT B"/>
    <property type="match status" value="1"/>
</dbReference>
<dbReference type="PANTHER" id="PTHR43400">
    <property type="entry name" value="FUMARATE REDUCTASE"/>
    <property type="match status" value="1"/>
</dbReference>
<dbReference type="Pfam" id="PF00890">
    <property type="entry name" value="FAD_binding_2"/>
    <property type="match status" value="1"/>
</dbReference>
<dbReference type="PIRSF" id="PIRSF000141">
    <property type="entry name" value="Anaerobic_G3P_dh"/>
    <property type="match status" value="1"/>
</dbReference>
<dbReference type="SUPFAM" id="SSF51905">
    <property type="entry name" value="FAD/NAD(P)-binding domain"/>
    <property type="match status" value="1"/>
</dbReference>
<accession>B2TW33</accession>